<protein>
    <recommendedName>
        <fullName evidence="1">UDP-N-acetylmuramate--L-alanine ligase</fullName>
        <ecNumber evidence="1">6.3.2.8</ecNumber>
    </recommendedName>
    <alternativeName>
        <fullName evidence="1">UDP-N-acetylmuramoyl-L-alanine synthetase</fullName>
    </alternativeName>
</protein>
<feature type="chain" id="PRO_1000004301" description="UDP-N-acetylmuramate--L-alanine ligase">
    <location>
        <begin position="1"/>
        <end position="475"/>
    </location>
</feature>
<feature type="binding site" evidence="1">
    <location>
        <begin position="112"/>
        <end position="118"/>
    </location>
    <ligand>
        <name>ATP</name>
        <dbReference type="ChEBI" id="CHEBI:30616"/>
    </ligand>
</feature>
<organism>
    <name type="scientific">Paracidovorax citrulli (strain AAC00-1)</name>
    <name type="common">Acidovorax citrulli</name>
    <dbReference type="NCBI Taxonomy" id="397945"/>
    <lineage>
        <taxon>Bacteria</taxon>
        <taxon>Pseudomonadati</taxon>
        <taxon>Pseudomonadota</taxon>
        <taxon>Betaproteobacteria</taxon>
        <taxon>Burkholderiales</taxon>
        <taxon>Comamonadaceae</taxon>
        <taxon>Paracidovorax</taxon>
    </lineage>
</organism>
<proteinExistence type="inferred from homology"/>
<gene>
    <name evidence="1" type="primary">murC</name>
    <name type="ordered locus">Aave_0822</name>
</gene>
<accession>A1TKD2</accession>
<comment type="function">
    <text evidence="1">Cell wall formation.</text>
</comment>
<comment type="catalytic activity">
    <reaction evidence="1">
        <text>UDP-N-acetyl-alpha-D-muramate + L-alanine + ATP = UDP-N-acetyl-alpha-D-muramoyl-L-alanine + ADP + phosphate + H(+)</text>
        <dbReference type="Rhea" id="RHEA:23372"/>
        <dbReference type="ChEBI" id="CHEBI:15378"/>
        <dbReference type="ChEBI" id="CHEBI:30616"/>
        <dbReference type="ChEBI" id="CHEBI:43474"/>
        <dbReference type="ChEBI" id="CHEBI:57972"/>
        <dbReference type="ChEBI" id="CHEBI:70757"/>
        <dbReference type="ChEBI" id="CHEBI:83898"/>
        <dbReference type="ChEBI" id="CHEBI:456216"/>
        <dbReference type="EC" id="6.3.2.8"/>
    </reaction>
</comment>
<comment type="pathway">
    <text evidence="1">Cell wall biogenesis; peptidoglycan biosynthesis.</text>
</comment>
<comment type="subcellular location">
    <subcellularLocation>
        <location evidence="1">Cytoplasm</location>
    </subcellularLocation>
</comment>
<comment type="similarity">
    <text evidence="1">Belongs to the MurCDEF family.</text>
</comment>
<dbReference type="EC" id="6.3.2.8" evidence="1"/>
<dbReference type="EMBL" id="CP000512">
    <property type="protein sequence ID" value="ABM31420.1"/>
    <property type="molecule type" value="Genomic_DNA"/>
</dbReference>
<dbReference type="RefSeq" id="WP_011793980.1">
    <property type="nucleotide sequence ID" value="NC_008752.1"/>
</dbReference>
<dbReference type="SMR" id="A1TKD2"/>
<dbReference type="STRING" id="397945.Aave_0822"/>
<dbReference type="KEGG" id="aav:Aave_0822"/>
<dbReference type="eggNOG" id="COG0773">
    <property type="taxonomic scope" value="Bacteria"/>
</dbReference>
<dbReference type="HOGENOM" id="CLU_028104_2_2_4"/>
<dbReference type="OrthoDB" id="9804126at2"/>
<dbReference type="UniPathway" id="UPA00219"/>
<dbReference type="Proteomes" id="UP000002596">
    <property type="component" value="Chromosome"/>
</dbReference>
<dbReference type="GO" id="GO:0005737">
    <property type="term" value="C:cytoplasm"/>
    <property type="evidence" value="ECO:0007669"/>
    <property type="project" value="UniProtKB-SubCell"/>
</dbReference>
<dbReference type="GO" id="GO:0005524">
    <property type="term" value="F:ATP binding"/>
    <property type="evidence" value="ECO:0007669"/>
    <property type="project" value="UniProtKB-UniRule"/>
</dbReference>
<dbReference type="GO" id="GO:0008763">
    <property type="term" value="F:UDP-N-acetylmuramate-L-alanine ligase activity"/>
    <property type="evidence" value="ECO:0007669"/>
    <property type="project" value="UniProtKB-UniRule"/>
</dbReference>
<dbReference type="GO" id="GO:0051301">
    <property type="term" value="P:cell division"/>
    <property type="evidence" value="ECO:0007669"/>
    <property type="project" value="UniProtKB-KW"/>
</dbReference>
<dbReference type="GO" id="GO:0071555">
    <property type="term" value="P:cell wall organization"/>
    <property type="evidence" value="ECO:0007669"/>
    <property type="project" value="UniProtKB-KW"/>
</dbReference>
<dbReference type="GO" id="GO:0009252">
    <property type="term" value="P:peptidoglycan biosynthetic process"/>
    <property type="evidence" value="ECO:0007669"/>
    <property type="project" value="UniProtKB-UniRule"/>
</dbReference>
<dbReference type="GO" id="GO:0008360">
    <property type="term" value="P:regulation of cell shape"/>
    <property type="evidence" value="ECO:0007669"/>
    <property type="project" value="UniProtKB-KW"/>
</dbReference>
<dbReference type="FunFam" id="3.40.1190.10:FF:000001">
    <property type="entry name" value="UDP-N-acetylmuramate--L-alanine ligase"/>
    <property type="match status" value="1"/>
</dbReference>
<dbReference type="Gene3D" id="3.90.190.20">
    <property type="entry name" value="Mur ligase, C-terminal domain"/>
    <property type="match status" value="1"/>
</dbReference>
<dbReference type="Gene3D" id="3.40.1190.10">
    <property type="entry name" value="Mur-like, catalytic domain"/>
    <property type="match status" value="1"/>
</dbReference>
<dbReference type="Gene3D" id="3.40.50.720">
    <property type="entry name" value="NAD(P)-binding Rossmann-like Domain"/>
    <property type="match status" value="1"/>
</dbReference>
<dbReference type="HAMAP" id="MF_00046">
    <property type="entry name" value="MurC"/>
    <property type="match status" value="1"/>
</dbReference>
<dbReference type="InterPro" id="IPR036565">
    <property type="entry name" value="Mur-like_cat_sf"/>
</dbReference>
<dbReference type="InterPro" id="IPR004101">
    <property type="entry name" value="Mur_ligase_C"/>
</dbReference>
<dbReference type="InterPro" id="IPR036615">
    <property type="entry name" value="Mur_ligase_C_dom_sf"/>
</dbReference>
<dbReference type="InterPro" id="IPR013221">
    <property type="entry name" value="Mur_ligase_cen"/>
</dbReference>
<dbReference type="InterPro" id="IPR000713">
    <property type="entry name" value="Mur_ligase_N"/>
</dbReference>
<dbReference type="InterPro" id="IPR050061">
    <property type="entry name" value="MurCDEF_pg_biosynth"/>
</dbReference>
<dbReference type="InterPro" id="IPR005758">
    <property type="entry name" value="UDP-N-AcMur_Ala_ligase_MurC"/>
</dbReference>
<dbReference type="NCBIfam" id="TIGR01082">
    <property type="entry name" value="murC"/>
    <property type="match status" value="1"/>
</dbReference>
<dbReference type="PANTHER" id="PTHR43445:SF3">
    <property type="entry name" value="UDP-N-ACETYLMURAMATE--L-ALANINE LIGASE"/>
    <property type="match status" value="1"/>
</dbReference>
<dbReference type="PANTHER" id="PTHR43445">
    <property type="entry name" value="UDP-N-ACETYLMURAMATE--L-ALANINE LIGASE-RELATED"/>
    <property type="match status" value="1"/>
</dbReference>
<dbReference type="Pfam" id="PF01225">
    <property type="entry name" value="Mur_ligase"/>
    <property type="match status" value="1"/>
</dbReference>
<dbReference type="Pfam" id="PF02875">
    <property type="entry name" value="Mur_ligase_C"/>
    <property type="match status" value="1"/>
</dbReference>
<dbReference type="Pfam" id="PF08245">
    <property type="entry name" value="Mur_ligase_M"/>
    <property type="match status" value="1"/>
</dbReference>
<dbReference type="SUPFAM" id="SSF51984">
    <property type="entry name" value="MurCD N-terminal domain"/>
    <property type="match status" value="1"/>
</dbReference>
<dbReference type="SUPFAM" id="SSF53623">
    <property type="entry name" value="MurD-like peptide ligases, catalytic domain"/>
    <property type="match status" value="1"/>
</dbReference>
<dbReference type="SUPFAM" id="SSF53244">
    <property type="entry name" value="MurD-like peptide ligases, peptide-binding domain"/>
    <property type="match status" value="1"/>
</dbReference>
<evidence type="ECO:0000255" key="1">
    <source>
        <dbReference type="HAMAP-Rule" id="MF_00046"/>
    </source>
</evidence>
<reference key="1">
    <citation type="submission" date="2006-12" db="EMBL/GenBank/DDBJ databases">
        <title>Complete sequence of Acidovorax avenae subsp. citrulli AAC00-1.</title>
        <authorList>
            <person name="Copeland A."/>
            <person name="Lucas S."/>
            <person name="Lapidus A."/>
            <person name="Barry K."/>
            <person name="Detter J.C."/>
            <person name="Glavina del Rio T."/>
            <person name="Dalin E."/>
            <person name="Tice H."/>
            <person name="Pitluck S."/>
            <person name="Kiss H."/>
            <person name="Brettin T."/>
            <person name="Bruce D."/>
            <person name="Han C."/>
            <person name="Tapia R."/>
            <person name="Gilna P."/>
            <person name="Schmutz J."/>
            <person name="Larimer F."/>
            <person name="Land M."/>
            <person name="Hauser L."/>
            <person name="Kyrpides N."/>
            <person name="Kim E."/>
            <person name="Stahl D."/>
            <person name="Richardson P."/>
        </authorList>
    </citation>
    <scope>NUCLEOTIDE SEQUENCE [LARGE SCALE GENOMIC DNA]</scope>
    <source>
        <strain>AAC00-1</strain>
    </source>
</reference>
<name>MURC_PARC0</name>
<keyword id="KW-0067">ATP-binding</keyword>
<keyword id="KW-0131">Cell cycle</keyword>
<keyword id="KW-0132">Cell division</keyword>
<keyword id="KW-0133">Cell shape</keyword>
<keyword id="KW-0961">Cell wall biogenesis/degradation</keyword>
<keyword id="KW-0963">Cytoplasm</keyword>
<keyword id="KW-0436">Ligase</keyword>
<keyword id="KW-0547">Nucleotide-binding</keyword>
<keyword id="KW-0573">Peptidoglycan synthesis</keyword>
<sequence>MKHAIRHIHFVGLGGAGMCGIAEVLFNLGYEISGSDLADSATLRRLAALGIATRVGHAAAHIEGADAVVTSTAVQSDNPEVIAARERKIPVVPRALMLAELMRLKRGIAIAGTHGKTTTTSLVTSVLAEAGLDPTFVIGGRLNSAGANAKLGQGEYIVVEADESDASFLNLLPVMAVVTNIDADHMETYGHDFGRLKSAFVDFLHRMPFYGTAILCTDNPAIREILPDVTCPVTSYGFSEDAQVRAVDVRADAGRMRFRVQRRNGVTLPDLDVVLNLAGEHNVLNALSAIAVAVELNIPDEALLRALAQFKGVGRRFQRYGELPAQGGGTFTLIEDYGHHPVEMTATLAAARGAFPGRRLVLAFQPHRYSRTRDCFEDFVKVMGSADAVLLTEVYAAGEAPIVAADGRSLARAVRVAGQVEPVFVDDIGELPRRIADNARGGDVVLCMGAGSIGAVPAKVVEMLRTDVPAMQEDR</sequence>